<keyword id="KW-0687">Ribonucleoprotein</keyword>
<keyword id="KW-0689">Ribosomal protein</keyword>
<keyword id="KW-0694">RNA-binding</keyword>
<keyword id="KW-0699">rRNA-binding</keyword>
<reference key="1">
    <citation type="journal article" date="2009" name="Infect. Immun.">
        <title>Comparative genomics reveal extensive transposon-mediated genomic plasticity and diversity among potential effector proteins within the genus Coxiella.</title>
        <authorList>
            <person name="Beare P.A."/>
            <person name="Unsworth N."/>
            <person name="Andoh M."/>
            <person name="Voth D.E."/>
            <person name="Omsland A."/>
            <person name="Gilk S.D."/>
            <person name="Williams K.P."/>
            <person name="Sobral B.W."/>
            <person name="Kupko J.J. III"/>
            <person name="Porcella S.F."/>
            <person name="Samuel J.E."/>
            <person name="Heinzen R.A."/>
        </authorList>
    </citation>
    <scope>NUCLEOTIDE SEQUENCE [LARGE SCALE GENOMIC DNA]</scope>
    <source>
        <strain>CbuK_Q154</strain>
    </source>
</reference>
<name>RL25_COXB1</name>
<comment type="function">
    <text evidence="1">This is one of the proteins that binds to the 5S RNA in the ribosome where it forms part of the central protuberance.</text>
</comment>
<comment type="subunit">
    <text evidence="1">Part of the 50S ribosomal subunit; part of the 5S rRNA/L5/L18/L25 subcomplex. Contacts the 5S rRNA. Binds to the 5S rRNA independently of L5 and L18.</text>
</comment>
<comment type="similarity">
    <text evidence="1">Belongs to the bacterial ribosomal protein bL25 family. CTC subfamily.</text>
</comment>
<dbReference type="EMBL" id="CP001020">
    <property type="protein sequence ID" value="ACJ19455.1"/>
    <property type="molecule type" value="Genomic_DNA"/>
</dbReference>
<dbReference type="RefSeq" id="WP_005770208.1">
    <property type="nucleotide sequence ID" value="NC_011528.1"/>
</dbReference>
<dbReference type="SMR" id="B6J9D8"/>
<dbReference type="KEGG" id="cbc:CbuK_0136"/>
<dbReference type="HOGENOM" id="CLU_075939_0_1_6"/>
<dbReference type="GO" id="GO:0022625">
    <property type="term" value="C:cytosolic large ribosomal subunit"/>
    <property type="evidence" value="ECO:0007669"/>
    <property type="project" value="TreeGrafter"/>
</dbReference>
<dbReference type="GO" id="GO:0008097">
    <property type="term" value="F:5S rRNA binding"/>
    <property type="evidence" value="ECO:0007669"/>
    <property type="project" value="InterPro"/>
</dbReference>
<dbReference type="GO" id="GO:0003735">
    <property type="term" value="F:structural constituent of ribosome"/>
    <property type="evidence" value="ECO:0007669"/>
    <property type="project" value="InterPro"/>
</dbReference>
<dbReference type="GO" id="GO:0006412">
    <property type="term" value="P:translation"/>
    <property type="evidence" value="ECO:0007669"/>
    <property type="project" value="UniProtKB-UniRule"/>
</dbReference>
<dbReference type="CDD" id="cd00495">
    <property type="entry name" value="Ribosomal_L25_TL5_CTC"/>
    <property type="match status" value="1"/>
</dbReference>
<dbReference type="FunFam" id="2.170.120.20:FF:000003">
    <property type="entry name" value="50S ribosomal protein L25"/>
    <property type="match status" value="1"/>
</dbReference>
<dbReference type="Gene3D" id="2.170.120.20">
    <property type="entry name" value="Ribosomal protein L25, beta domain"/>
    <property type="match status" value="1"/>
</dbReference>
<dbReference type="Gene3D" id="2.40.240.10">
    <property type="entry name" value="Ribosomal Protein L25, Chain P"/>
    <property type="match status" value="1"/>
</dbReference>
<dbReference type="HAMAP" id="MF_01334">
    <property type="entry name" value="Ribosomal_bL25_CTC"/>
    <property type="match status" value="1"/>
</dbReference>
<dbReference type="InterPro" id="IPR020056">
    <property type="entry name" value="Rbsml_bL25/Gln-tRNA_synth_N"/>
</dbReference>
<dbReference type="InterPro" id="IPR011035">
    <property type="entry name" value="Ribosomal_bL25/Gln-tRNA_synth"/>
</dbReference>
<dbReference type="InterPro" id="IPR020057">
    <property type="entry name" value="Ribosomal_bL25_b-dom"/>
</dbReference>
<dbReference type="InterPro" id="IPR037121">
    <property type="entry name" value="Ribosomal_bL25_C"/>
</dbReference>
<dbReference type="InterPro" id="IPR001021">
    <property type="entry name" value="Ribosomal_bL25_long"/>
</dbReference>
<dbReference type="InterPro" id="IPR029751">
    <property type="entry name" value="Ribosomal_L25_dom"/>
</dbReference>
<dbReference type="InterPro" id="IPR020930">
    <property type="entry name" value="Ribosomal_uL5_bac-type"/>
</dbReference>
<dbReference type="NCBIfam" id="TIGR00731">
    <property type="entry name" value="bL25_bact_ctc"/>
    <property type="match status" value="1"/>
</dbReference>
<dbReference type="NCBIfam" id="NF004128">
    <property type="entry name" value="PRK05618.1-2"/>
    <property type="match status" value="1"/>
</dbReference>
<dbReference type="NCBIfam" id="NF004130">
    <property type="entry name" value="PRK05618.1-5"/>
    <property type="match status" value="1"/>
</dbReference>
<dbReference type="NCBIfam" id="NF004612">
    <property type="entry name" value="PRK05943.1"/>
    <property type="match status" value="1"/>
</dbReference>
<dbReference type="PANTHER" id="PTHR33284">
    <property type="entry name" value="RIBOSOMAL PROTEIN L25/GLN-TRNA SYNTHETASE, ANTI-CODON-BINDING DOMAIN-CONTAINING PROTEIN"/>
    <property type="match status" value="1"/>
</dbReference>
<dbReference type="PANTHER" id="PTHR33284:SF1">
    <property type="entry name" value="RIBOSOMAL PROTEIN L25_GLN-TRNA SYNTHETASE, ANTI-CODON-BINDING DOMAIN-CONTAINING PROTEIN"/>
    <property type="match status" value="1"/>
</dbReference>
<dbReference type="Pfam" id="PF01386">
    <property type="entry name" value="Ribosomal_L25p"/>
    <property type="match status" value="1"/>
</dbReference>
<dbReference type="Pfam" id="PF14693">
    <property type="entry name" value="Ribosomal_TL5_C"/>
    <property type="match status" value="1"/>
</dbReference>
<dbReference type="SUPFAM" id="SSF50715">
    <property type="entry name" value="Ribosomal protein L25-like"/>
    <property type="match status" value="1"/>
</dbReference>
<gene>
    <name evidence="1" type="primary">rplY</name>
    <name evidence="1" type="synonym">ctc</name>
    <name type="ordered locus">CbuK_0136</name>
</gene>
<evidence type="ECO:0000255" key="1">
    <source>
        <dbReference type="HAMAP-Rule" id="MF_01334"/>
    </source>
</evidence>
<evidence type="ECO:0000256" key="2">
    <source>
        <dbReference type="SAM" id="MobiDB-lite"/>
    </source>
</evidence>
<evidence type="ECO:0000305" key="3"/>
<protein>
    <recommendedName>
        <fullName evidence="1">Large ribosomal subunit protein bL25</fullName>
    </recommendedName>
    <alternativeName>
        <fullName evidence="3">50S ribosomal protein L25</fullName>
    </alternativeName>
    <alternativeName>
        <fullName evidence="1">General stress protein CTC</fullName>
    </alternativeName>
</protein>
<proteinExistence type="inferred from homology"/>
<sequence length="244" mass="26539">MAAESFELIAELREFTGKSAARRMRRFEDKVPGTVYGAGKAPQSITLLQKDLLKALESESTFSSILTLKVGDKKQKVILKALQRHHTKPKIVHIDFQRIKASEKLIMNVPLHFLGEDDCPGVEAGGVVSHLQSEVEIRCLPADLPEYIEVDLSHLQLDESVHLSNLKLPAGVGLTSAVDEEHDSPIASVHMPRVSKADVEAEAAEAALAKEAATEAAEEEETEKPASEAEASGEAEQADTDKKE</sequence>
<organism>
    <name type="scientific">Coxiella burnetii (strain CbuK_Q154)</name>
    <name type="common">Coxiella burnetii (strain Q154)</name>
    <dbReference type="NCBI Taxonomy" id="434924"/>
    <lineage>
        <taxon>Bacteria</taxon>
        <taxon>Pseudomonadati</taxon>
        <taxon>Pseudomonadota</taxon>
        <taxon>Gammaproteobacteria</taxon>
        <taxon>Legionellales</taxon>
        <taxon>Coxiellaceae</taxon>
        <taxon>Coxiella</taxon>
    </lineage>
</organism>
<feature type="chain" id="PRO_1000142509" description="Large ribosomal subunit protein bL25">
    <location>
        <begin position="1"/>
        <end position="244"/>
    </location>
</feature>
<feature type="region of interest" description="Disordered" evidence="2">
    <location>
        <begin position="197"/>
        <end position="244"/>
    </location>
</feature>
<feature type="compositionally biased region" description="Low complexity" evidence="2">
    <location>
        <begin position="204"/>
        <end position="215"/>
    </location>
</feature>
<accession>B6J9D8</accession>